<keyword id="KW-0002">3D-structure</keyword>
<keyword id="KW-0067">ATP-binding</keyword>
<keyword id="KW-0158">Chromosome</keyword>
<keyword id="KW-0903">Direct protein sequencing</keyword>
<keyword id="KW-0347">Helicase</keyword>
<keyword id="KW-0378">Hydrolase</keyword>
<keyword id="KW-0547">Nucleotide-binding</keyword>
<keyword id="KW-0539">Nucleus</keyword>
<keyword id="KW-1267">Proteomics identification</keyword>
<keyword id="KW-1185">Reference proteome</keyword>
<keyword id="KW-0694">RNA-binding</keyword>
<evidence type="ECO:0000250" key="1">
    <source>
        <dbReference type="UniProtKB" id="Q8K363"/>
    </source>
</evidence>
<evidence type="ECO:0000255" key="2">
    <source>
        <dbReference type="PROSITE-ProRule" id="PRU00541"/>
    </source>
</evidence>
<evidence type="ECO:0000255" key="3">
    <source>
        <dbReference type="PROSITE-ProRule" id="PRU00542"/>
    </source>
</evidence>
<evidence type="ECO:0000256" key="4">
    <source>
        <dbReference type="SAM" id="MobiDB-lite"/>
    </source>
</evidence>
<evidence type="ECO:0000269" key="5">
    <source>
    </source>
</evidence>
<evidence type="ECO:0000269" key="6">
    <source>
    </source>
</evidence>
<evidence type="ECO:0000269" key="7">
    <source>
    </source>
</evidence>
<evidence type="ECO:0000269" key="8">
    <source>
    </source>
</evidence>
<evidence type="ECO:0000269" key="9">
    <source>
    </source>
</evidence>
<evidence type="ECO:0000269" key="10">
    <source>
    </source>
</evidence>
<evidence type="ECO:0000269" key="11">
    <source ref="4"/>
</evidence>
<evidence type="ECO:0000303" key="12">
    <source>
    </source>
</evidence>
<evidence type="ECO:0000305" key="13"/>
<evidence type="ECO:0007829" key="14">
    <source>
        <dbReference type="PDB" id="3LY5"/>
    </source>
</evidence>
<dbReference type="EC" id="3.6.4.13"/>
<dbReference type="EMBL" id="AK001467">
    <property type="protein sequence ID" value="BAA91709.1"/>
    <property type="molecule type" value="mRNA"/>
</dbReference>
<dbReference type="EMBL" id="BC001238">
    <property type="protein sequence ID" value="AAH01238.1"/>
    <property type="molecule type" value="mRNA"/>
</dbReference>
<dbReference type="EMBL" id="BC003360">
    <property type="protein sequence ID" value="AAH03360.1"/>
    <property type="molecule type" value="mRNA"/>
</dbReference>
<dbReference type="EMBL" id="BC024739">
    <property type="protein sequence ID" value="AAH24739.1"/>
    <property type="molecule type" value="mRNA"/>
</dbReference>
<dbReference type="EMBL" id="X98743">
    <property type="protein sequence ID" value="CAA67295.1"/>
    <property type="status" value="ALT_INIT"/>
    <property type="molecule type" value="mRNA"/>
</dbReference>
<dbReference type="EMBL" id="CR457060">
    <property type="protein sequence ID" value="CAG33341.1"/>
    <property type="molecule type" value="mRNA"/>
</dbReference>
<dbReference type="CCDS" id="CCDS2120.1"/>
<dbReference type="PIR" id="S71758">
    <property type="entry name" value="S71758"/>
</dbReference>
<dbReference type="RefSeq" id="NP_006764.3">
    <property type="nucleotide sequence ID" value="NM_006773.3"/>
</dbReference>
<dbReference type="PDB" id="3LY5">
    <property type="method" value="X-ray"/>
    <property type="resolution" value="2.80 A"/>
    <property type="chains" value="A/B=149-387"/>
</dbReference>
<dbReference type="PDB" id="8FKP">
    <property type="method" value="EM"/>
    <property type="resolution" value="2.85 A"/>
    <property type="chains" value="SW=1-670"/>
</dbReference>
<dbReference type="PDB" id="8FKQ">
    <property type="method" value="EM"/>
    <property type="resolution" value="2.76 A"/>
    <property type="chains" value="SW=1-670"/>
</dbReference>
<dbReference type="PDB" id="8FKR">
    <property type="method" value="EM"/>
    <property type="resolution" value="2.89 A"/>
    <property type="chains" value="SW=1-670"/>
</dbReference>
<dbReference type="PDB" id="8FKS">
    <property type="method" value="EM"/>
    <property type="resolution" value="2.88 A"/>
    <property type="chains" value="SW=1-670"/>
</dbReference>
<dbReference type="PDB" id="8FKT">
    <property type="method" value="EM"/>
    <property type="resolution" value="2.81 A"/>
    <property type="chains" value="SW=1-670"/>
</dbReference>
<dbReference type="PDB" id="8FKU">
    <property type="method" value="EM"/>
    <property type="resolution" value="2.82 A"/>
    <property type="chains" value="SW=1-670"/>
</dbReference>
<dbReference type="PDB" id="8FKV">
    <property type="method" value="EM"/>
    <property type="resolution" value="2.47 A"/>
    <property type="chains" value="SW=1-670"/>
</dbReference>
<dbReference type="PDB" id="8FKW">
    <property type="method" value="EM"/>
    <property type="resolution" value="2.50 A"/>
    <property type="chains" value="SW=1-670"/>
</dbReference>
<dbReference type="PDB" id="8FKX">
    <property type="method" value="EM"/>
    <property type="resolution" value="2.59 A"/>
    <property type="chains" value="SW=1-670"/>
</dbReference>
<dbReference type="PDB" id="8FKY">
    <property type="method" value="EM"/>
    <property type="resolution" value="2.67 A"/>
    <property type="chains" value="SW=1-670"/>
</dbReference>
<dbReference type="PDBsum" id="3LY5"/>
<dbReference type="PDBsum" id="8FKP"/>
<dbReference type="PDBsum" id="8FKQ"/>
<dbReference type="PDBsum" id="8FKR"/>
<dbReference type="PDBsum" id="8FKS"/>
<dbReference type="PDBsum" id="8FKT"/>
<dbReference type="PDBsum" id="8FKU"/>
<dbReference type="PDBsum" id="8FKV"/>
<dbReference type="PDBsum" id="8FKW"/>
<dbReference type="PDBsum" id="8FKX"/>
<dbReference type="PDBsum" id="8FKY"/>
<dbReference type="EMDB" id="EMD-29252"/>
<dbReference type="EMDB" id="EMD-29253"/>
<dbReference type="EMDB" id="EMD-29254"/>
<dbReference type="EMDB" id="EMD-29255"/>
<dbReference type="EMDB" id="EMD-29256"/>
<dbReference type="EMDB" id="EMD-29257"/>
<dbReference type="EMDB" id="EMD-29258"/>
<dbReference type="EMDB" id="EMD-29259"/>
<dbReference type="EMDB" id="EMD-29260"/>
<dbReference type="EMDB" id="EMD-29261"/>
<dbReference type="SMR" id="Q9NVP1"/>
<dbReference type="BioGRID" id="114404">
    <property type="interactions" value="349"/>
</dbReference>
<dbReference type="FunCoup" id="Q9NVP1">
    <property type="interactions" value="2874"/>
</dbReference>
<dbReference type="IntAct" id="Q9NVP1">
    <property type="interactions" value="136"/>
</dbReference>
<dbReference type="MINT" id="Q9NVP1"/>
<dbReference type="STRING" id="9606.ENSP00000263239"/>
<dbReference type="GlyGen" id="Q9NVP1">
    <property type="glycosylation" value="1 site, 1 O-linked glycan (1 site)"/>
</dbReference>
<dbReference type="iPTMnet" id="Q9NVP1"/>
<dbReference type="MetOSite" id="Q9NVP1"/>
<dbReference type="PhosphoSitePlus" id="Q9NVP1"/>
<dbReference type="SwissPalm" id="Q9NVP1"/>
<dbReference type="BioMuta" id="DDX18"/>
<dbReference type="DMDM" id="20532388"/>
<dbReference type="jPOST" id="Q9NVP1"/>
<dbReference type="MassIVE" id="Q9NVP1"/>
<dbReference type="PaxDb" id="9606-ENSP00000263239"/>
<dbReference type="PeptideAtlas" id="Q9NVP1"/>
<dbReference type="ProteomicsDB" id="82837"/>
<dbReference type="Pumba" id="Q9NVP1"/>
<dbReference type="Antibodypedia" id="33358">
    <property type="antibodies" value="87 antibodies from 23 providers"/>
</dbReference>
<dbReference type="DNASU" id="8886"/>
<dbReference type="Ensembl" id="ENST00000263239.7">
    <property type="protein sequence ID" value="ENSP00000263239.2"/>
    <property type="gene ID" value="ENSG00000088205.13"/>
</dbReference>
<dbReference type="GeneID" id="8886"/>
<dbReference type="KEGG" id="hsa:8886"/>
<dbReference type="MANE-Select" id="ENST00000263239.7">
    <property type="protein sequence ID" value="ENSP00000263239.2"/>
    <property type="RefSeq nucleotide sequence ID" value="NM_006773.4"/>
    <property type="RefSeq protein sequence ID" value="NP_006764.3"/>
</dbReference>
<dbReference type="UCSC" id="uc002tlh.2">
    <property type="organism name" value="human"/>
</dbReference>
<dbReference type="AGR" id="HGNC:2741"/>
<dbReference type="CTD" id="8886"/>
<dbReference type="DisGeNET" id="8886"/>
<dbReference type="GeneCards" id="DDX18"/>
<dbReference type="HGNC" id="HGNC:2741">
    <property type="gene designation" value="DDX18"/>
</dbReference>
<dbReference type="HPA" id="ENSG00000088205">
    <property type="expression patterns" value="Low tissue specificity"/>
</dbReference>
<dbReference type="MIM" id="606355">
    <property type="type" value="gene"/>
</dbReference>
<dbReference type="neXtProt" id="NX_Q9NVP1"/>
<dbReference type="OpenTargets" id="ENSG00000088205"/>
<dbReference type="PharmGKB" id="PA27207"/>
<dbReference type="VEuPathDB" id="HostDB:ENSG00000088205"/>
<dbReference type="eggNOG" id="KOG0342">
    <property type="taxonomic scope" value="Eukaryota"/>
</dbReference>
<dbReference type="GeneTree" id="ENSGT00680000100037"/>
<dbReference type="HOGENOM" id="CLU_003041_26_5_1"/>
<dbReference type="InParanoid" id="Q9NVP1"/>
<dbReference type="OMA" id="LMEFHSQ"/>
<dbReference type="OrthoDB" id="10259640at2759"/>
<dbReference type="PAN-GO" id="Q9NVP1">
    <property type="GO annotations" value="2 GO annotations based on evolutionary models"/>
</dbReference>
<dbReference type="PhylomeDB" id="Q9NVP1"/>
<dbReference type="TreeFam" id="TF300471"/>
<dbReference type="PathwayCommons" id="Q9NVP1"/>
<dbReference type="SignaLink" id="Q9NVP1"/>
<dbReference type="BioGRID-ORCS" id="8886">
    <property type="hits" value="801 hits in 1132 CRISPR screens"/>
</dbReference>
<dbReference type="CD-CODE" id="232F8A39">
    <property type="entry name" value="P-body"/>
</dbReference>
<dbReference type="CD-CODE" id="91857CE7">
    <property type="entry name" value="Nucleolus"/>
</dbReference>
<dbReference type="ChiTaRS" id="DDX18">
    <property type="organism name" value="human"/>
</dbReference>
<dbReference type="EvolutionaryTrace" id="Q9NVP1"/>
<dbReference type="GenomeRNAi" id="8886"/>
<dbReference type="Pharos" id="Q9NVP1">
    <property type="development level" value="Tbio"/>
</dbReference>
<dbReference type="PRO" id="PR:Q9NVP1"/>
<dbReference type="Proteomes" id="UP000005640">
    <property type="component" value="Chromosome 2"/>
</dbReference>
<dbReference type="RNAct" id="Q9NVP1">
    <property type="molecule type" value="protein"/>
</dbReference>
<dbReference type="Bgee" id="ENSG00000088205">
    <property type="expression patterns" value="Expressed in oocyte and 207 other cell types or tissues"/>
</dbReference>
<dbReference type="ExpressionAtlas" id="Q9NVP1">
    <property type="expression patterns" value="baseline and differential"/>
</dbReference>
<dbReference type="GO" id="GO:0005694">
    <property type="term" value="C:chromosome"/>
    <property type="evidence" value="ECO:0000314"/>
    <property type="project" value="UniProtKB"/>
</dbReference>
<dbReference type="GO" id="GO:0016020">
    <property type="term" value="C:membrane"/>
    <property type="evidence" value="ECO:0007005"/>
    <property type="project" value="UniProtKB"/>
</dbReference>
<dbReference type="GO" id="GO:0005730">
    <property type="term" value="C:nucleolus"/>
    <property type="evidence" value="ECO:0000314"/>
    <property type="project" value="UniProtKB"/>
</dbReference>
<dbReference type="GO" id="GO:0005524">
    <property type="term" value="F:ATP binding"/>
    <property type="evidence" value="ECO:0007669"/>
    <property type="project" value="UniProtKB-KW"/>
</dbReference>
<dbReference type="GO" id="GO:0016887">
    <property type="term" value="F:ATP hydrolysis activity"/>
    <property type="evidence" value="ECO:0007669"/>
    <property type="project" value="RHEA"/>
</dbReference>
<dbReference type="GO" id="GO:0003723">
    <property type="term" value="F:RNA binding"/>
    <property type="evidence" value="ECO:0007005"/>
    <property type="project" value="UniProtKB"/>
</dbReference>
<dbReference type="GO" id="GO:0003724">
    <property type="term" value="F:RNA helicase activity"/>
    <property type="evidence" value="ECO:0000304"/>
    <property type="project" value="ProtInc"/>
</dbReference>
<dbReference type="GO" id="GO:0071392">
    <property type="term" value="P:cellular response to estradiol stimulus"/>
    <property type="evidence" value="ECO:0007669"/>
    <property type="project" value="Ensembl"/>
</dbReference>
<dbReference type="GO" id="GO:0000463">
    <property type="term" value="P:maturation of LSU-rRNA from tricistronic rRNA transcript (SSU-rRNA, 5.8S rRNA, LSU-rRNA)"/>
    <property type="evidence" value="ECO:0000318"/>
    <property type="project" value="GO_Central"/>
</dbReference>
<dbReference type="CDD" id="cd17942">
    <property type="entry name" value="DEADc_DDX18"/>
    <property type="match status" value="1"/>
</dbReference>
<dbReference type="CDD" id="cd18787">
    <property type="entry name" value="SF2_C_DEAD"/>
    <property type="match status" value="1"/>
</dbReference>
<dbReference type="FunFam" id="3.40.50.300:FF:000379">
    <property type="entry name" value="RNA helicase"/>
    <property type="match status" value="1"/>
</dbReference>
<dbReference type="FunFam" id="3.40.50.300:FF:000460">
    <property type="entry name" value="RNA helicase"/>
    <property type="match status" value="1"/>
</dbReference>
<dbReference type="Gene3D" id="3.40.50.300">
    <property type="entry name" value="P-loop containing nucleotide triphosphate hydrolases"/>
    <property type="match status" value="2"/>
</dbReference>
<dbReference type="InterPro" id="IPR044773">
    <property type="entry name" value="DDX18/Has1_DEADc"/>
</dbReference>
<dbReference type="InterPro" id="IPR011545">
    <property type="entry name" value="DEAD/DEAH_box_helicase_dom"/>
</dbReference>
<dbReference type="InterPro" id="IPR014001">
    <property type="entry name" value="Helicase_ATP-bd"/>
</dbReference>
<dbReference type="InterPro" id="IPR001650">
    <property type="entry name" value="Helicase_C-like"/>
</dbReference>
<dbReference type="InterPro" id="IPR027417">
    <property type="entry name" value="P-loop_NTPase"/>
</dbReference>
<dbReference type="InterPro" id="IPR000629">
    <property type="entry name" value="RNA-helicase_DEAD-box_CS"/>
</dbReference>
<dbReference type="InterPro" id="IPR025313">
    <property type="entry name" value="SPB4-like_CTE"/>
</dbReference>
<dbReference type="PANTHER" id="PTHR24031">
    <property type="entry name" value="RNA HELICASE"/>
    <property type="match status" value="1"/>
</dbReference>
<dbReference type="Pfam" id="PF13959">
    <property type="entry name" value="CTE_SPB4"/>
    <property type="match status" value="1"/>
</dbReference>
<dbReference type="Pfam" id="PF00270">
    <property type="entry name" value="DEAD"/>
    <property type="match status" value="1"/>
</dbReference>
<dbReference type="Pfam" id="PF00271">
    <property type="entry name" value="Helicase_C"/>
    <property type="match status" value="1"/>
</dbReference>
<dbReference type="SMART" id="SM00487">
    <property type="entry name" value="DEXDc"/>
    <property type="match status" value="1"/>
</dbReference>
<dbReference type="SMART" id="SM01178">
    <property type="entry name" value="DUF4217"/>
    <property type="match status" value="1"/>
</dbReference>
<dbReference type="SMART" id="SM00490">
    <property type="entry name" value="HELICc"/>
    <property type="match status" value="1"/>
</dbReference>
<dbReference type="SUPFAM" id="SSF52540">
    <property type="entry name" value="P-loop containing nucleoside triphosphate hydrolases"/>
    <property type="match status" value="1"/>
</dbReference>
<dbReference type="PROSITE" id="PS00039">
    <property type="entry name" value="DEAD_ATP_HELICASE"/>
    <property type="match status" value="1"/>
</dbReference>
<dbReference type="PROSITE" id="PS51192">
    <property type="entry name" value="HELICASE_ATP_BIND_1"/>
    <property type="match status" value="1"/>
</dbReference>
<dbReference type="PROSITE" id="PS51194">
    <property type="entry name" value="HELICASE_CTER"/>
    <property type="match status" value="1"/>
</dbReference>
<dbReference type="PROSITE" id="PS51195">
    <property type="entry name" value="Q_MOTIF"/>
    <property type="match status" value="1"/>
</dbReference>
<comment type="function">
    <text evidence="1 10">ATP-dependent RNA helicase that plays a role in the regulation of R-loop homeostasis in both endogenous R-loop-prone regions and at sites of DNA damage. At endogenous loci such as actively transcribed genes, may act as a helicase to resolve the formation of R-loop during transcription and prevent the interference of R-loop with DNA-replication machinery. Also participates in the removal of DNA-lesion-associated R-loop (PubMed:35858569). Plays an essential role for establishing pluripotency during embryogenesis and for pluripotency maintenance in embryonic stem cells. Mechanistically, prevents the polycomb repressive complex 2 (PRC2) from accessing rDNA loci and protects the active chromatin status in nucleolus (By similarity).</text>
</comment>
<comment type="catalytic activity">
    <reaction>
        <text>ATP + H2O = ADP + phosphate + H(+)</text>
        <dbReference type="Rhea" id="RHEA:13065"/>
        <dbReference type="ChEBI" id="CHEBI:15377"/>
        <dbReference type="ChEBI" id="CHEBI:15378"/>
        <dbReference type="ChEBI" id="CHEBI:30616"/>
        <dbReference type="ChEBI" id="CHEBI:43474"/>
        <dbReference type="ChEBI" id="CHEBI:456216"/>
        <dbReference type="EC" id="3.6.4.13"/>
    </reaction>
</comment>
<comment type="subunit">
    <text evidence="1 7 9">Interacts with NOL8; the interaction is RNA-dependent. Interacts with PRC2 complex components EZH2, SUZ2 and JARID2; these interactions prevent deposition of the repressive H3K27me3 mark onto rDNA in pluripotent cells (By similarity).</text>
</comment>
<comment type="subcellular location">
    <subcellularLocation>
        <location evidence="7">Nucleus</location>
        <location evidence="7">Nucleolus</location>
    </subcellularLocation>
    <subcellularLocation>
        <location evidence="8 10">Chromosome</location>
    </subcellularLocation>
</comment>
<comment type="similarity">
    <text evidence="13">Belongs to the DEAD box helicase family. DDX18/HAS1 subfamily.</text>
</comment>
<comment type="sequence caution" evidence="13">
    <conflict type="erroneous initiation">
        <sequence resource="EMBL-CDS" id="CAA67295"/>
    </conflict>
    <text>Truncated N-terminus.</text>
</comment>
<feature type="chain" id="PRO_0000055001" description="ATP-dependent RNA helicase DDX18">
    <location>
        <begin position="1"/>
        <end position="670"/>
    </location>
</feature>
<feature type="domain" description="Helicase ATP-binding" evidence="2">
    <location>
        <begin position="210"/>
        <end position="385"/>
    </location>
</feature>
<feature type="domain" description="Helicase C-terminal" evidence="3">
    <location>
        <begin position="399"/>
        <end position="569"/>
    </location>
</feature>
<feature type="region of interest" description="Disordered" evidence="4">
    <location>
        <begin position="31"/>
        <end position="169"/>
    </location>
</feature>
<feature type="short sequence motif" description="Q motif">
    <location>
        <begin position="179"/>
        <end position="207"/>
    </location>
</feature>
<feature type="short sequence motif" description="DEAD box">
    <location>
        <begin position="333"/>
        <end position="336"/>
    </location>
</feature>
<feature type="compositionally biased region" description="Polar residues" evidence="4">
    <location>
        <begin position="31"/>
        <end position="42"/>
    </location>
</feature>
<feature type="compositionally biased region" description="Polar residues" evidence="4">
    <location>
        <begin position="83"/>
        <end position="105"/>
    </location>
</feature>
<feature type="compositionally biased region" description="Basic and acidic residues" evidence="4">
    <location>
        <begin position="117"/>
        <end position="154"/>
    </location>
</feature>
<feature type="binding site" evidence="13">
    <location>
        <begin position="223"/>
        <end position="230"/>
    </location>
    <ligand>
        <name>ATP</name>
        <dbReference type="ChEBI" id="CHEBI:30616"/>
    </ligand>
</feature>
<feature type="sequence variant" id="VAR_035841" description="In a breast cancer sample; somatic mutation." evidence="6">
    <original>G</original>
    <variation>R</variation>
    <location>
        <position position="41"/>
    </location>
</feature>
<feature type="sequence variant" id="VAR_013293" description="In dbSNP:rs1052637." evidence="5 11">
    <original>T</original>
    <variation>S</variation>
    <location>
        <position position="94"/>
    </location>
</feature>
<feature type="sequence variant" id="VAR_033857" description="In dbSNP:rs10179772.">
    <original>K</original>
    <variation>R</variation>
    <location>
        <position position="647"/>
    </location>
</feature>
<feature type="mutagenesis site" description="Decreased poly(ADP-ribose) (PAR) polymers-binding ability; when associated with A-523." evidence="10">
    <original>R</original>
    <variation>A</variation>
    <location>
        <position position="518"/>
    </location>
</feature>
<feature type="mutagenesis site" description="Decreased poly(ADP-ribose) (PAR) polymers-binding ability; when associated with A-518." evidence="10">
    <original>R</original>
    <variation>A</variation>
    <location>
        <position position="523"/>
    </location>
</feature>
<feature type="sequence conflict" description="In Ref. 1; BAA91709." evidence="13" ref="1">
    <original>P</original>
    <variation>T</variation>
    <location>
        <position position="248"/>
    </location>
</feature>
<feature type="sequence conflict" description="In Ref. 4; CAG33341." evidence="13" ref="4">
    <original>E</original>
    <variation>G</variation>
    <location>
        <position position="382"/>
    </location>
</feature>
<feature type="helix" evidence="14">
    <location>
        <begin position="175"/>
        <end position="177"/>
    </location>
</feature>
<feature type="helix" evidence="14">
    <location>
        <begin position="188"/>
        <end position="196"/>
    </location>
</feature>
<feature type="helix" evidence="14">
    <location>
        <begin position="204"/>
        <end position="215"/>
    </location>
</feature>
<feature type="helix" evidence="14">
    <location>
        <begin position="229"/>
        <end position="243"/>
    </location>
</feature>
<feature type="helix" evidence="14">
    <location>
        <begin position="248"/>
        <end position="250"/>
    </location>
</feature>
<feature type="strand" evidence="14">
    <location>
        <begin position="254"/>
        <end position="257"/>
    </location>
</feature>
<feature type="helix" evidence="14">
    <location>
        <begin position="261"/>
        <end position="274"/>
    </location>
</feature>
<feature type="turn" evidence="14">
    <location>
        <begin position="275"/>
        <end position="277"/>
    </location>
</feature>
<feature type="strand" evidence="14">
    <location>
        <begin position="282"/>
        <end position="285"/>
    </location>
</feature>
<feature type="strand" evidence="14">
    <location>
        <begin position="287"/>
        <end position="289"/>
    </location>
</feature>
<feature type="helix" evidence="14">
    <location>
        <begin position="291"/>
        <end position="300"/>
    </location>
</feature>
<feature type="strand" evidence="14">
    <location>
        <begin position="303"/>
        <end position="307"/>
    </location>
</feature>
<feature type="helix" evidence="14">
    <location>
        <begin position="309"/>
        <end position="318"/>
    </location>
</feature>
<feature type="strand" evidence="14">
    <location>
        <begin position="329"/>
        <end position="332"/>
    </location>
</feature>
<feature type="helix" evidence="14">
    <location>
        <begin position="335"/>
        <end position="340"/>
    </location>
</feature>
<feature type="helix" evidence="14">
    <location>
        <begin position="344"/>
        <end position="353"/>
    </location>
</feature>
<feature type="strand" evidence="14">
    <location>
        <begin position="356"/>
        <end position="363"/>
    </location>
</feature>
<feature type="helix" evidence="14">
    <location>
        <begin position="369"/>
        <end position="378"/>
    </location>
</feature>
<sequence length="670" mass="75407">MSHLPMKLLRKKIEKRNLKLRQRNLKFQGASNLTLSETQNGDVSEETMGSRKVKKSKQKPMNVGLSETQNGGMSQEAVGNIKVTKSPQKSTVLTNGEAAMQSSNSESKKKKKKKRKMVNDAEPDTKKAKTENKGKSEEESAETTKETENNVEKPDNDEDESEVPSLPLGLTGAFEDTSFASLCNLVNENTLKAIKEMGFTNMTEIQHKSIRPLLEGRDLLAAAKTGSGKTLAFLIPAVELIVKLRFMPRNGTGVLILSPTRELAMQTFGVLKELMTHHVHTYGLIMGGSNRSAEAQKLGNGINIIVATPGRLLDHMQNTPGFMYKNLQCLVIDEADRILDVGFEEELKQIIKLLPTRRQTMLFSATQTRKVEDLARISLKKEPLYVGVDDDKANATVDGLEQGYVVCPSEKRFLLLFTFLKKNRKKKLMVFFSSCMSVKYHYELLNYIDLPVLAIHGKQKQNKRTTTFFQFCNADSGTLLCTDVAARGLDIPEVDWIVQYDPPDDPKEYIHRVGRTARGLNGRGHALLILRPEELGFLRYLKQSKVPLSEFDFSWSKISDIQSQLEKLIEKNYFLHKSAQEAYKSYIRAYDSHSLKQIFNVNNLNLPQVALSFGFKVPPFVDLNVNSNEGKQKKRGGGGGFGYQKTKKVEKSKIFKHISKKSSDSRQFSH</sequence>
<accession>Q9NVP1</accession>
<accession>Q6GTZ9</accession>
<accession>Q6IAU4</accession>
<accession>Q92732</accession>
<accession>Q9BQB7</accession>
<organism>
    <name type="scientific">Homo sapiens</name>
    <name type="common">Human</name>
    <dbReference type="NCBI Taxonomy" id="9606"/>
    <lineage>
        <taxon>Eukaryota</taxon>
        <taxon>Metazoa</taxon>
        <taxon>Chordata</taxon>
        <taxon>Craniata</taxon>
        <taxon>Vertebrata</taxon>
        <taxon>Euteleostomi</taxon>
        <taxon>Mammalia</taxon>
        <taxon>Eutheria</taxon>
        <taxon>Euarchontoglires</taxon>
        <taxon>Primates</taxon>
        <taxon>Haplorrhini</taxon>
        <taxon>Catarrhini</taxon>
        <taxon>Hominidae</taxon>
        <taxon>Homo</taxon>
    </lineage>
</organism>
<gene>
    <name type="primary">DDX18</name>
    <name evidence="12" type="synonym">cPERP-D</name>
</gene>
<protein>
    <recommendedName>
        <fullName>ATP-dependent RNA helicase DDX18</fullName>
        <ecNumber>3.6.4.13</ecNumber>
    </recommendedName>
    <alternativeName>
        <fullName>DEAD box protein 18</fullName>
    </alternativeName>
    <alternativeName>
        <fullName>Myc-regulated DEAD box protein</fullName>
        <shortName>MrDb</shortName>
    </alternativeName>
</protein>
<proteinExistence type="evidence at protein level"/>
<reference key="1">
    <citation type="journal article" date="2004" name="Nat. Genet.">
        <title>Complete sequencing and characterization of 21,243 full-length human cDNAs.</title>
        <authorList>
            <person name="Ota T."/>
            <person name="Suzuki Y."/>
            <person name="Nishikawa T."/>
            <person name="Otsuki T."/>
            <person name="Sugiyama T."/>
            <person name="Irie R."/>
            <person name="Wakamatsu A."/>
            <person name="Hayashi K."/>
            <person name="Sato H."/>
            <person name="Nagai K."/>
            <person name="Kimura K."/>
            <person name="Makita H."/>
            <person name="Sekine M."/>
            <person name="Obayashi M."/>
            <person name="Nishi T."/>
            <person name="Shibahara T."/>
            <person name="Tanaka T."/>
            <person name="Ishii S."/>
            <person name="Yamamoto J."/>
            <person name="Saito K."/>
            <person name="Kawai Y."/>
            <person name="Isono Y."/>
            <person name="Nakamura Y."/>
            <person name="Nagahari K."/>
            <person name="Murakami K."/>
            <person name="Yasuda T."/>
            <person name="Iwayanagi T."/>
            <person name="Wagatsuma M."/>
            <person name="Shiratori A."/>
            <person name="Sudo H."/>
            <person name="Hosoiri T."/>
            <person name="Kaku Y."/>
            <person name="Kodaira H."/>
            <person name="Kondo H."/>
            <person name="Sugawara M."/>
            <person name="Takahashi M."/>
            <person name="Kanda K."/>
            <person name="Yokoi T."/>
            <person name="Furuya T."/>
            <person name="Kikkawa E."/>
            <person name="Omura Y."/>
            <person name="Abe K."/>
            <person name="Kamihara K."/>
            <person name="Katsuta N."/>
            <person name="Sato K."/>
            <person name="Tanikawa M."/>
            <person name="Yamazaki M."/>
            <person name="Ninomiya K."/>
            <person name="Ishibashi T."/>
            <person name="Yamashita H."/>
            <person name="Murakawa K."/>
            <person name="Fujimori K."/>
            <person name="Tanai H."/>
            <person name="Kimata M."/>
            <person name="Watanabe M."/>
            <person name="Hiraoka S."/>
            <person name="Chiba Y."/>
            <person name="Ishida S."/>
            <person name="Ono Y."/>
            <person name="Takiguchi S."/>
            <person name="Watanabe S."/>
            <person name="Yosida M."/>
            <person name="Hotuta T."/>
            <person name="Kusano J."/>
            <person name="Kanehori K."/>
            <person name="Takahashi-Fujii A."/>
            <person name="Hara H."/>
            <person name="Tanase T.-O."/>
            <person name="Nomura Y."/>
            <person name="Togiya S."/>
            <person name="Komai F."/>
            <person name="Hara R."/>
            <person name="Takeuchi K."/>
            <person name="Arita M."/>
            <person name="Imose N."/>
            <person name="Musashino K."/>
            <person name="Yuuki H."/>
            <person name="Oshima A."/>
            <person name="Sasaki N."/>
            <person name="Aotsuka S."/>
            <person name="Yoshikawa Y."/>
            <person name="Matsunawa H."/>
            <person name="Ichihara T."/>
            <person name="Shiohata N."/>
            <person name="Sano S."/>
            <person name="Moriya S."/>
            <person name="Momiyama H."/>
            <person name="Satoh N."/>
            <person name="Takami S."/>
            <person name="Terashima Y."/>
            <person name="Suzuki O."/>
            <person name="Nakagawa S."/>
            <person name="Senoh A."/>
            <person name="Mizoguchi H."/>
            <person name="Goto Y."/>
            <person name="Shimizu F."/>
            <person name="Wakebe H."/>
            <person name="Hishigaki H."/>
            <person name="Watanabe T."/>
            <person name="Sugiyama A."/>
            <person name="Takemoto M."/>
            <person name="Kawakami B."/>
            <person name="Yamazaki M."/>
            <person name="Watanabe K."/>
            <person name="Kumagai A."/>
            <person name="Itakura S."/>
            <person name="Fukuzumi Y."/>
            <person name="Fujimori Y."/>
            <person name="Komiyama M."/>
            <person name="Tashiro H."/>
            <person name="Tanigami A."/>
            <person name="Fujiwara T."/>
            <person name="Ono T."/>
            <person name="Yamada K."/>
            <person name="Fujii Y."/>
            <person name="Ozaki K."/>
            <person name="Hirao M."/>
            <person name="Ohmori Y."/>
            <person name="Kawabata A."/>
            <person name="Hikiji T."/>
            <person name="Kobatake N."/>
            <person name="Inagaki H."/>
            <person name="Ikema Y."/>
            <person name="Okamoto S."/>
            <person name="Okitani R."/>
            <person name="Kawakami T."/>
            <person name="Noguchi S."/>
            <person name="Itoh T."/>
            <person name="Shigeta K."/>
            <person name="Senba T."/>
            <person name="Matsumura K."/>
            <person name="Nakajima Y."/>
            <person name="Mizuno T."/>
            <person name="Morinaga M."/>
            <person name="Sasaki M."/>
            <person name="Togashi T."/>
            <person name="Oyama M."/>
            <person name="Hata H."/>
            <person name="Watanabe M."/>
            <person name="Komatsu T."/>
            <person name="Mizushima-Sugano J."/>
            <person name="Satoh T."/>
            <person name="Shirai Y."/>
            <person name="Takahashi Y."/>
            <person name="Nakagawa K."/>
            <person name="Okumura K."/>
            <person name="Nagase T."/>
            <person name="Nomura N."/>
            <person name="Kikuchi H."/>
            <person name="Masuho Y."/>
            <person name="Yamashita R."/>
            <person name="Nakai K."/>
            <person name="Yada T."/>
            <person name="Nakamura Y."/>
            <person name="Ohara O."/>
            <person name="Isogai T."/>
            <person name="Sugano S."/>
        </authorList>
    </citation>
    <scope>NUCLEOTIDE SEQUENCE [LARGE SCALE MRNA]</scope>
</reference>
<reference key="2">
    <citation type="journal article" date="2004" name="Genome Res.">
        <title>The status, quality, and expansion of the NIH full-length cDNA project: the Mammalian Gene Collection (MGC).</title>
        <authorList>
            <consortium name="The MGC Project Team"/>
        </authorList>
    </citation>
    <scope>NUCLEOTIDE SEQUENCE [LARGE SCALE MRNA]</scope>
    <scope>VARIANT SER-94</scope>
    <source>
        <tissue>Placenta</tissue>
    </source>
</reference>
<reference key="3">
    <citation type="journal article" date="1996" name="EMBO J.">
        <title>Myc-Max heterodimers activate a DEAD box gene and interact with multiple E box-related sites in vivo.</title>
        <authorList>
            <person name="Grandori C."/>
            <person name="Mac J."/>
            <person name="Siebelt F."/>
            <person name="Ayer D.A."/>
            <person name="Eisenman R.E."/>
        </authorList>
    </citation>
    <scope>NUCLEOTIDE SEQUENCE [MRNA] OF 56-670</scope>
</reference>
<reference key="4">
    <citation type="submission" date="2004-06" db="EMBL/GenBank/DDBJ databases">
        <title>Cloning of human full open reading frames in Gateway(TM) system entry vector (pDONR201).</title>
        <authorList>
            <person name="Ebert L."/>
            <person name="Schick M."/>
            <person name="Neubert P."/>
            <person name="Schatten R."/>
            <person name="Henze S."/>
            <person name="Korn B."/>
        </authorList>
    </citation>
    <scope>NUCLEOTIDE SEQUENCE [LARGE SCALE MRNA] OF 61-670</scope>
    <scope>VARIANT SER-94</scope>
</reference>
<reference key="5">
    <citation type="journal article" date="2003" name="Nat. Biotechnol.">
        <title>Exploring proteomes and analyzing protein processing by mass spectrometric identification of sorted N-terminal peptides.</title>
        <authorList>
            <person name="Gevaert K."/>
            <person name="Goethals M."/>
            <person name="Martens L."/>
            <person name="Van Damme J."/>
            <person name="Staes A."/>
            <person name="Thomas G.R."/>
            <person name="Vandekerckhove J."/>
        </authorList>
    </citation>
    <scope>PROTEIN SEQUENCE OF 370-376</scope>
    <source>
        <tissue>Platelet</tissue>
    </source>
</reference>
<reference key="6">
    <citation type="journal article" date="2006" name="Nucleic Acids Res.">
        <title>NOP132 is required for proper nucleolus localization of DEAD-box RNA helicase DDX47.</title>
        <authorList>
            <person name="Sekiguchi T."/>
            <person name="Hayano T."/>
            <person name="Yanagida M."/>
            <person name="Takahashi N."/>
            <person name="Nishimoto T."/>
        </authorList>
    </citation>
    <scope>INTERACTION WITH NOL8</scope>
    <scope>SUBCELLULAR LOCATION</scope>
</reference>
<reference key="7">
    <citation type="journal article" date="2009" name="Science">
        <title>Lysine acetylation targets protein complexes and co-regulates major cellular functions.</title>
        <authorList>
            <person name="Choudhary C."/>
            <person name="Kumar C."/>
            <person name="Gnad F."/>
            <person name="Nielsen M.L."/>
            <person name="Rehman M."/>
            <person name="Walther T.C."/>
            <person name="Olsen J.V."/>
            <person name="Mann M."/>
        </authorList>
    </citation>
    <scope>IDENTIFICATION BY MASS SPECTROMETRY [LARGE SCALE ANALYSIS]</scope>
</reference>
<reference key="8">
    <citation type="journal article" date="2010" name="Cell">
        <title>The protein composition of mitotic chromosomes determined using multiclassifier combinatorial proteomics.</title>
        <authorList>
            <person name="Ohta S."/>
            <person name="Bukowski-Wills J.C."/>
            <person name="Sanchez-Pulido L."/>
            <person name="Alves Fde L."/>
            <person name="Wood L."/>
            <person name="Chen Z.A."/>
            <person name="Platani M."/>
            <person name="Fischer L."/>
            <person name="Hudson D.F."/>
            <person name="Ponting C.P."/>
            <person name="Fukagawa T."/>
            <person name="Earnshaw W.C."/>
            <person name="Rappsilber J."/>
        </authorList>
    </citation>
    <scope>SUBCELLULAR LOCATION</scope>
</reference>
<reference key="9">
    <citation type="journal article" date="2011" name="BMC Syst. Biol.">
        <title>Initial characterization of the human central proteome.</title>
        <authorList>
            <person name="Burkard T.R."/>
            <person name="Planyavsky M."/>
            <person name="Kaupe I."/>
            <person name="Breitwieser F.P."/>
            <person name="Buerckstuemmer T."/>
            <person name="Bennett K.L."/>
            <person name="Superti-Furga G."/>
            <person name="Colinge J."/>
        </authorList>
    </citation>
    <scope>IDENTIFICATION BY MASS SPECTROMETRY [LARGE SCALE ANALYSIS]</scope>
</reference>
<reference key="10">
    <citation type="journal article" date="2014" name="J. Proteomics">
        <title>An enzyme assisted RP-RPLC approach for in-depth analysis of human liver phosphoproteome.</title>
        <authorList>
            <person name="Bian Y."/>
            <person name="Song C."/>
            <person name="Cheng K."/>
            <person name="Dong M."/>
            <person name="Wang F."/>
            <person name="Huang J."/>
            <person name="Sun D."/>
            <person name="Wang L."/>
            <person name="Ye M."/>
            <person name="Zou H."/>
        </authorList>
    </citation>
    <scope>IDENTIFICATION BY MASS SPECTROMETRY [LARGE SCALE ANALYSIS]</scope>
    <source>
        <tissue>Liver</tissue>
    </source>
</reference>
<reference key="11">
    <citation type="journal article" date="2022" name="Cell Rep.">
        <title>DDX18 prevents R-loop-induced DNA damage and genome instability via PARP-1.</title>
        <authorList>
            <person name="Lin W.L."/>
            <person name="Chen J.K."/>
            <person name="Wen X."/>
            <person name="He W."/>
            <person name="Zarceno G.A."/>
            <person name="Chen Y."/>
            <person name="Chen S."/>
            <person name="Paull T.T."/>
            <person name="Liu H.W."/>
        </authorList>
    </citation>
    <scope>FUNCTION</scope>
    <scope>SUBCELLULAR LOCATION</scope>
    <scope>MUTAGENESIS OF ARG-518 AND ARG-523</scope>
</reference>
<reference key="12">
    <citation type="journal article" date="2010" name="PLoS ONE">
        <title>Comparative structural analysis of human DEAD-box RNA helicases.</title>
        <authorList>
            <person name="Schutz P."/>
            <person name="Karlberg T."/>
            <person name="van den Berg S."/>
            <person name="Collins R."/>
            <person name="Lehtio L."/>
            <person name="Hogbom M."/>
            <person name="Holmberg-Schiavone L."/>
            <person name="Tempel W."/>
            <person name="Park H.W."/>
            <person name="Hammarstrom M."/>
            <person name="Moche M."/>
            <person name="Thorsell A.G."/>
            <person name="Schuler H."/>
        </authorList>
    </citation>
    <scope>X-RAY CRYSTALLOGRAPHY (2.8 ANGSTROMS) OF 149-387 IN COMPLEX WITH PHOSPHATE</scope>
</reference>
<reference key="13">
    <citation type="journal article" date="2006" name="Science">
        <title>The consensus coding sequences of human breast and colorectal cancers.</title>
        <authorList>
            <person name="Sjoeblom T."/>
            <person name="Jones S."/>
            <person name="Wood L.D."/>
            <person name="Parsons D.W."/>
            <person name="Lin J."/>
            <person name="Barber T.D."/>
            <person name="Mandelker D."/>
            <person name="Leary R.J."/>
            <person name="Ptak J."/>
            <person name="Silliman N."/>
            <person name="Szabo S."/>
            <person name="Buckhaults P."/>
            <person name="Farrell C."/>
            <person name="Meeh P."/>
            <person name="Markowitz S.D."/>
            <person name="Willis J."/>
            <person name="Dawson D."/>
            <person name="Willson J.K.V."/>
            <person name="Gazdar A.F."/>
            <person name="Hartigan J."/>
            <person name="Wu L."/>
            <person name="Liu C."/>
            <person name="Parmigiani G."/>
            <person name="Park B.H."/>
            <person name="Bachman K.E."/>
            <person name="Papadopoulos N."/>
            <person name="Vogelstein B."/>
            <person name="Kinzler K.W."/>
            <person name="Velculescu V.E."/>
        </authorList>
    </citation>
    <scope>VARIANT [LARGE SCALE ANALYSIS] ARG-41</scope>
</reference>
<name>DDX18_HUMAN</name>